<evidence type="ECO:0000255" key="1">
    <source>
        <dbReference type="HAMAP-Rule" id="MF_02111"/>
    </source>
</evidence>
<sequence>MDRRIFGIETEYGVTCAAPDGRGLSADEVARYLFRKVVAWGRSSNVFLRNGSRLYLDVGSHPEYATAECDDVRQLVTYDKGGERILEGLVADAQQRLEHEGLPGTVHLFKNNTDSAGNSYGCHENYLVRRQGDFARLSDILVPFLITRQVLVGAGKVLATPRGAVYCLSQRADHIWEAVSSATTRSRPIINTRDEPHADAEYFRRLHVIVGDSSMAEPTTMLKVGATDLVLRLVEAGVIMRDLSLENPIRAIREISHDRTGTHAVQLADGRTMTAVDIQGEYFRRVREHVDAHGINDADPSPTTKAVLDLWERGLHALESGDLSSVDRELDWVIKLRLIERYQAKHGLELDDPRIARLDLAYHDISRTEGLYNLLAARGMVERVTTDLEILESTAVPPPTTRAKLRGDFVRAAQDARRDYTVDWVHLKLNDQAQRTVLCKDPFRSVDERVDRLIESM</sequence>
<comment type="function">
    <text evidence="1">Catalyzes the covalent attachment of the prokaryotic ubiquitin-like protein modifier Pup to the proteasomal substrate proteins, thereby targeting them for proteasomal degradation. This tagging system is termed pupylation. The ligation reaction involves the side-chain carboxylate of the C-terminal glutamate of Pup and the side-chain amino group of a substrate lysine.</text>
</comment>
<comment type="catalytic activity">
    <reaction evidence="1">
        <text>ATP + [prokaryotic ubiquitin-like protein]-L-glutamate + [protein]-L-lysine = ADP + phosphate + N(6)-([prokaryotic ubiquitin-like protein]-gamma-L-glutamyl)-[protein]-L-lysine.</text>
        <dbReference type="EC" id="6.3.1.19"/>
    </reaction>
</comment>
<comment type="pathway">
    <text evidence="1">Protein degradation; proteasomal Pup-dependent pathway.</text>
</comment>
<comment type="pathway">
    <text evidence="1">Protein modification; protein pupylation.</text>
</comment>
<comment type="miscellaneous">
    <text evidence="1">The reaction mechanism probably proceeds via the activation of Pup by phosphorylation of its C-terminal glutamate, which is then subject to nucleophilic attack by the substrate lysine, resulting in an isopeptide bond and the release of phosphate as a good leaving group.</text>
</comment>
<comment type="similarity">
    <text evidence="1">Belongs to the Pup ligase/Pup deamidase family. Pup-conjugating enzyme subfamily.</text>
</comment>
<accession>D1BS28</accession>
<feature type="chain" id="PRO_0000395962" description="Pup--protein ligase">
    <location>
        <begin position="1"/>
        <end position="457"/>
    </location>
</feature>
<feature type="active site" description="Proton acceptor" evidence="1">
    <location>
        <position position="57"/>
    </location>
</feature>
<feature type="binding site" evidence="1">
    <location>
        <position position="9"/>
    </location>
    <ligand>
        <name>Mg(2+)</name>
        <dbReference type="ChEBI" id="CHEBI:18420"/>
    </ligand>
</feature>
<feature type="binding site" evidence="1">
    <location>
        <position position="53"/>
    </location>
    <ligand>
        <name>ATP</name>
        <dbReference type="ChEBI" id="CHEBI:30616"/>
    </ligand>
</feature>
<feature type="binding site" evidence="1">
    <location>
        <position position="55"/>
    </location>
    <ligand>
        <name>Mg(2+)</name>
        <dbReference type="ChEBI" id="CHEBI:18420"/>
    </ligand>
</feature>
<feature type="binding site" evidence="1">
    <location>
        <position position="63"/>
    </location>
    <ligand>
        <name>Mg(2+)</name>
        <dbReference type="ChEBI" id="CHEBI:18420"/>
    </ligand>
</feature>
<feature type="binding site" evidence="1">
    <location>
        <position position="66"/>
    </location>
    <ligand>
        <name>ATP</name>
        <dbReference type="ChEBI" id="CHEBI:30616"/>
    </ligand>
</feature>
<feature type="binding site" evidence="1">
    <location>
        <position position="424"/>
    </location>
    <ligand>
        <name>ATP</name>
        <dbReference type="ChEBI" id="CHEBI:30616"/>
    </ligand>
</feature>
<reference key="1">
    <citation type="submission" date="2009-11" db="EMBL/GenBank/DDBJ databases">
        <title>The complete chromosome of Xylanimonas cellulosilytica DSM 15894.</title>
        <authorList>
            <consortium name="US DOE Joint Genome Institute (JGI-PGF)"/>
            <person name="Lucas S."/>
            <person name="Copeland A."/>
            <person name="Lapidus A."/>
            <person name="Glavina del Rio T."/>
            <person name="Dalin E."/>
            <person name="Tice H."/>
            <person name="Bruce D."/>
            <person name="Goodwin L."/>
            <person name="Pitluck S."/>
            <person name="Kyrpides N."/>
            <person name="Mavromatis K."/>
            <person name="Ivanova N."/>
            <person name="Mikhailova N."/>
            <person name="Foster B."/>
            <person name="Clum A."/>
            <person name="Brettin T."/>
            <person name="Detter J.C."/>
            <person name="Han C."/>
            <person name="Larimer F."/>
            <person name="Land M."/>
            <person name="Hauser L."/>
            <person name="Markowitz V."/>
            <person name="Cheng J.F."/>
            <person name="Hugenholtz P."/>
            <person name="Woyke T."/>
            <person name="Wu D."/>
            <person name="Gehrich-Schroeter G."/>
            <person name="Schneider S."/>
            <person name="Pukall S.R."/>
            <person name="Klenk H.P."/>
            <person name="Eisen J.A."/>
        </authorList>
    </citation>
    <scope>NUCLEOTIDE SEQUENCE [LARGE SCALE GENOMIC DNA]</scope>
    <source>
        <strain>DSM 15894 / JCM 12276 / CECT 5975 / KCTC 9989 / LMG 20990 / NBRC 107835 / XIL07</strain>
    </source>
</reference>
<name>PAFA_XYLCX</name>
<keyword id="KW-0067">ATP-binding</keyword>
<keyword id="KW-0436">Ligase</keyword>
<keyword id="KW-0460">Magnesium</keyword>
<keyword id="KW-0479">Metal-binding</keyword>
<keyword id="KW-0547">Nucleotide-binding</keyword>
<keyword id="KW-1185">Reference proteome</keyword>
<keyword id="KW-0833">Ubl conjugation pathway</keyword>
<dbReference type="EC" id="6.3.1.19" evidence="1"/>
<dbReference type="EMBL" id="CP001821">
    <property type="protein sequence ID" value="ACZ30520.1"/>
    <property type="molecule type" value="Genomic_DNA"/>
</dbReference>
<dbReference type="RefSeq" id="WP_012878262.1">
    <property type="nucleotide sequence ID" value="NC_013530.1"/>
</dbReference>
<dbReference type="SMR" id="D1BS28"/>
<dbReference type="STRING" id="446471.Xcel_1490"/>
<dbReference type="MEROPS" id="U72.001"/>
<dbReference type="KEGG" id="xce:Xcel_1490"/>
<dbReference type="eggNOG" id="COG0638">
    <property type="taxonomic scope" value="Bacteria"/>
</dbReference>
<dbReference type="HOGENOM" id="CLU_040524_0_1_11"/>
<dbReference type="OrthoDB" id="9760627at2"/>
<dbReference type="UniPathway" id="UPA00997"/>
<dbReference type="UniPathway" id="UPA00998"/>
<dbReference type="Proteomes" id="UP000002255">
    <property type="component" value="Chromosome"/>
</dbReference>
<dbReference type="GO" id="GO:0005524">
    <property type="term" value="F:ATP binding"/>
    <property type="evidence" value="ECO:0007669"/>
    <property type="project" value="UniProtKB-UniRule"/>
</dbReference>
<dbReference type="GO" id="GO:0016879">
    <property type="term" value="F:ligase activity, forming carbon-nitrogen bonds"/>
    <property type="evidence" value="ECO:0007669"/>
    <property type="project" value="InterPro"/>
</dbReference>
<dbReference type="GO" id="GO:0000287">
    <property type="term" value="F:magnesium ion binding"/>
    <property type="evidence" value="ECO:0007669"/>
    <property type="project" value="UniProtKB-UniRule"/>
</dbReference>
<dbReference type="GO" id="GO:0019787">
    <property type="term" value="F:ubiquitin-like protein transferase activity"/>
    <property type="evidence" value="ECO:0007669"/>
    <property type="project" value="UniProtKB-UniRule"/>
</dbReference>
<dbReference type="GO" id="GO:0019941">
    <property type="term" value="P:modification-dependent protein catabolic process"/>
    <property type="evidence" value="ECO:0007669"/>
    <property type="project" value="UniProtKB-UniRule"/>
</dbReference>
<dbReference type="GO" id="GO:0010498">
    <property type="term" value="P:proteasomal protein catabolic process"/>
    <property type="evidence" value="ECO:0007669"/>
    <property type="project" value="UniProtKB-UniRule"/>
</dbReference>
<dbReference type="GO" id="GO:0070490">
    <property type="term" value="P:protein pupylation"/>
    <property type="evidence" value="ECO:0007669"/>
    <property type="project" value="UniProtKB-UniRule"/>
</dbReference>
<dbReference type="HAMAP" id="MF_02111">
    <property type="entry name" value="Pup_ligase"/>
    <property type="match status" value="1"/>
</dbReference>
<dbReference type="InterPro" id="IPR022279">
    <property type="entry name" value="Pup_ligase"/>
</dbReference>
<dbReference type="InterPro" id="IPR004347">
    <property type="entry name" value="Pup_ligase/deamidase"/>
</dbReference>
<dbReference type="NCBIfam" id="TIGR03686">
    <property type="entry name" value="pupylate_PafA"/>
    <property type="match status" value="1"/>
</dbReference>
<dbReference type="PANTHER" id="PTHR42307">
    <property type="entry name" value="PUP DEAMIDASE/DEPUPYLASE"/>
    <property type="match status" value="1"/>
</dbReference>
<dbReference type="PANTHER" id="PTHR42307:SF3">
    <property type="entry name" value="PUP--PROTEIN LIGASE"/>
    <property type="match status" value="1"/>
</dbReference>
<dbReference type="Pfam" id="PF03136">
    <property type="entry name" value="Pup_ligase"/>
    <property type="match status" value="1"/>
</dbReference>
<dbReference type="PIRSF" id="PIRSF018077">
    <property type="entry name" value="UCP018077"/>
    <property type="match status" value="1"/>
</dbReference>
<gene>
    <name evidence="1" type="primary">pafA</name>
    <name type="ordered locus">Xcel_1490</name>
</gene>
<organism>
    <name type="scientific">Xylanimonas cellulosilytica (strain DSM 15894 / JCM 12276 / CECT 5975 / KCTC 9989 / LMG 20990 / NBRC 107835 / XIL07)</name>
    <dbReference type="NCBI Taxonomy" id="446471"/>
    <lineage>
        <taxon>Bacteria</taxon>
        <taxon>Bacillati</taxon>
        <taxon>Actinomycetota</taxon>
        <taxon>Actinomycetes</taxon>
        <taxon>Micrococcales</taxon>
        <taxon>Promicromonosporaceae</taxon>
        <taxon>Xylanimonas</taxon>
    </lineage>
</organism>
<proteinExistence type="inferred from homology"/>
<protein>
    <recommendedName>
        <fullName evidence="1">Pup--protein ligase</fullName>
        <ecNumber evidence="1">6.3.1.19</ecNumber>
    </recommendedName>
    <alternativeName>
        <fullName evidence="1">Proteasome accessory factor A</fullName>
    </alternativeName>
    <alternativeName>
        <fullName evidence="1">Pup-conjugating enzyme</fullName>
    </alternativeName>
</protein>